<protein>
    <recommendedName>
        <fullName evidence="1">Fluoride-specific ion channel FluC 1</fullName>
    </recommendedName>
</protein>
<comment type="function">
    <text evidence="1">Fluoride-specific ion channel. Important for reducing fluoride concentration in the cell, thus reducing its toxicity.</text>
</comment>
<comment type="catalytic activity">
    <reaction evidence="1">
        <text>fluoride(in) = fluoride(out)</text>
        <dbReference type="Rhea" id="RHEA:76159"/>
        <dbReference type="ChEBI" id="CHEBI:17051"/>
    </reaction>
    <physiologicalReaction direction="left-to-right" evidence="1">
        <dbReference type="Rhea" id="RHEA:76160"/>
    </physiologicalReaction>
</comment>
<comment type="activity regulation">
    <text evidence="1">Na(+) is not transported, but it plays an essential structural role and its presence is essential for fluoride channel function.</text>
</comment>
<comment type="subcellular location">
    <subcellularLocation>
        <location evidence="1">Cell membrane</location>
        <topology evidence="1">Multi-pass membrane protein</topology>
    </subcellularLocation>
</comment>
<comment type="similarity">
    <text evidence="1">Belongs to the fluoride channel Fluc/FEX (TC 1.A.43) family.</text>
</comment>
<gene>
    <name evidence="1" type="primary">fluC1</name>
    <name evidence="1" type="synonym">crcB1</name>
    <name type="ordered locus">VNG_1919H</name>
</gene>
<evidence type="ECO:0000255" key="1">
    <source>
        <dbReference type="HAMAP-Rule" id="MF_00454"/>
    </source>
</evidence>
<keyword id="KW-1003">Cell membrane</keyword>
<keyword id="KW-0407">Ion channel</keyword>
<keyword id="KW-0406">Ion transport</keyword>
<keyword id="KW-0472">Membrane</keyword>
<keyword id="KW-0479">Metal-binding</keyword>
<keyword id="KW-1185">Reference proteome</keyword>
<keyword id="KW-0915">Sodium</keyword>
<keyword id="KW-0812">Transmembrane</keyword>
<keyword id="KW-1133">Transmembrane helix</keyword>
<keyword id="KW-0813">Transport</keyword>
<name>FLUC1_HALSA</name>
<accession>Q9HNW2</accession>
<feature type="chain" id="PRO_0000110223" description="Fluoride-specific ion channel FluC 1">
    <location>
        <begin position="1"/>
        <end position="119"/>
    </location>
</feature>
<feature type="transmembrane region" description="Helical" evidence="1">
    <location>
        <begin position="2"/>
        <end position="22"/>
    </location>
</feature>
<feature type="transmembrane region" description="Helical" evidence="1">
    <location>
        <begin position="37"/>
        <end position="57"/>
    </location>
</feature>
<feature type="transmembrane region" description="Helical" evidence="1">
    <location>
        <begin position="62"/>
        <end position="82"/>
    </location>
</feature>
<feature type="transmembrane region" description="Helical" evidence="1">
    <location>
        <begin position="99"/>
        <end position="119"/>
    </location>
</feature>
<feature type="binding site" evidence="1">
    <location>
        <position position="72"/>
    </location>
    <ligand>
        <name>Na(+)</name>
        <dbReference type="ChEBI" id="CHEBI:29101"/>
        <note>structural</note>
    </ligand>
</feature>
<feature type="binding site" evidence="1">
    <location>
        <position position="75"/>
    </location>
    <ligand>
        <name>Na(+)</name>
        <dbReference type="ChEBI" id="CHEBI:29101"/>
        <note>structural</note>
    </ligand>
</feature>
<organism>
    <name type="scientific">Halobacterium salinarum (strain ATCC 700922 / JCM 11081 / NRC-1)</name>
    <name type="common">Halobacterium halobium</name>
    <dbReference type="NCBI Taxonomy" id="64091"/>
    <lineage>
        <taxon>Archaea</taxon>
        <taxon>Methanobacteriati</taxon>
        <taxon>Methanobacteriota</taxon>
        <taxon>Stenosarchaea group</taxon>
        <taxon>Halobacteria</taxon>
        <taxon>Halobacteriales</taxon>
        <taxon>Halobacteriaceae</taxon>
        <taxon>Halobacterium</taxon>
        <taxon>Halobacterium salinarum NRC-34001</taxon>
    </lineage>
</organism>
<reference key="1">
    <citation type="journal article" date="2000" name="Proc. Natl. Acad. Sci. U.S.A.">
        <title>Genome sequence of Halobacterium species NRC-1.</title>
        <authorList>
            <person name="Ng W.V."/>
            <person name="Kennedy S.P."/>
            <person name="Mahairas G.G."/>
            <person name="Berquist B."/>
            <person name="Pan M."/>
            <person name="Shukla H.D."/>
            <person name="Lasky S.R."/>
            <person name="Baliga N.S."/>
            <person name="Thorsson V."/>
            <person name="Sbrogna J."/>
            <person name="Swartzell S."/>
            <person name="Weir D."/>
            <person name="Hall J."/>
            <person name="Dahl T.A."/>
            <person name="Welti R."/>
            <person name="Goo Y.A."/>
            <person name="Leithauser B."/>
            <person name="Keller K."/>
            <person name="Cruz R."/>
            <person name="Danson M.J."/>
            <person name="Hough D.W."/>
            <person name="Maddocks D.G."/>
            <person name="Jablonski P.E."/>
            <person name="Krebs M.P."/>
            <person name="Angevine C.M."/>
            <person name="Dale H."/>
            <person name="Isenbarger T.A."/>
            <person name="Peck R.F."/>
            <person name="Pohlschroder M."/>
            <person name="Spudich J.L."/>
            <person name="Jung K.-H."/>
            <person name="Alam M."/>
            <person name="Freitas T."/>
            <person name="Hou S."/>
            <person name="Daniels C.J."/>
            <person name="Dennis P.P."/>
            <person name="Omer A.D."/>
            <person name="Ebhardt H."/>
            <person name="Lowe T.M."/>
            <person name="Liang P."/>
            <person name="Riley M."/>
            <person name="Hood L."/>
            <person name="DasSarma S."/>
        </authorList>
    </citation>
    <scope>NUCLEOTIDE SEQUENCE [LARGE SCALE GENOMIC DNA]</scope>
    <source>
        <strain>ATCC 700922 / JCM 11081 / NRC-1</strain>
    </source>
</reference>
<sequence>MTGAVAPPAVLVAAGGALGAVLRWRVVAATPTTEYPAGTLVVNVVGSFVLAALTFAAADADTMLLFGTGACGAFTTFASFSVDVVALVDADRPVAAAGHALGNLLGAGLAVALAWLLVA</sequence>
<proteinExistence type="inferred from homology"/>
<dbReference type="EMBL" id="AE004437">
    <property type="protein sequence ID" value="AAG20108.1"/>
    <property type="molecule type" value="Genomic_DNA"/>
</dbReference>
<dbReference type="PIR" id="H84342">
    <property type="entry name" value="H84342"/>
</dbReference>
<dbReference type="RefSeq" id="WP_010903408.1">
    <property type="nucleotide sequence ID" value="NC_002607.1"/>
</dbReference>
<dbReference type="SMR" id="Q9HNW2"/>
<dbReference type="FunCoup" id="Q9HNW2">
    <property type="interactions" value="2"/>
</dbReference>
<dbReference type="STRING" id="64091.VNG_1919H"/>
<dbReference type="PaxDb" id="64091-VNG_1919H"/>
<dbReference type="KEGG" id="hal:VNG_1919H"/>
<dbReference type="PATRIC" id="fig|64091.14.peg.1467"/>
<dbReference type="HOGENOM" id="CLU_114342_2_1_2"/>
<dbReference type="InParanoid" id="Q9HNW2"/>
<dbReference type="Proteomes" id="UP000000554">
    <property type="component" value="Chromosome"/>
</dbReference>
<dbReference type="GO" id="GO:0005886">
    <property type="term" value="C:plasma membrane"/>
    <property type="evidence" value="ECO:0000318"/>
    <property type="project" value="GO_Central"/>
</dbReference>
<dbReference type="GO" id="GO:0062054">
    <property type="term" value="F:fluoride channel activity"/>
    <property type="evidence" value="ECO:0007669"/>
    <property type="project" value="UniProtKB-UniRule"/>
</dbReference>
<dbReference type="GO" id="GO:1903425">
    <property type="term" value="F:fluoride transmembrane transporter activity"/>
    <property type="evidence" value="ECO:0000318"/>
    <property type="project" value="GO_Central"/>
</dbReference>
<dbReference type="GO" id="GO:0046872">
    <property type="term" value="F:metal ion binding"/>
    <property type="evidence" value="ECO:0007669"/>
    <property type="project" value="UniProtKB-KW"/>
</dbReference>
<dbReference type="GO" id="GO:0140114">
    <property type="term" value="P:cellular detoxification of fluoride"/>
    <property type="evidence" value="ECO:0007669"/>
    <property type="project" value="UniProtKB-UniRule"/>
</dbReference>
<dbReference type="GO" id="GO:1903424">
    <property type="term" value="P:fluoride transmembrane transport"/>
    <property type="evidence" value="ECO:0000318"/>
    <property type="project" value="GO_Central"/>
</dbReference>
<dbReference type="HAMAP" id="MF_00454">
    <property type="entry name" value="FluC"/>
    <property type="match status" value="1"/>
</dbReference>
<dbReference type="InterPro" id="IPR003691">
    <property type="entry name" value="FluC"/>
</dbReference>
<dbReference type="PANTHER" id="PTHR28259">
    <property type="entry name" value="FLUORIDE EXPORT PROTEIN 1-RELATED"/>
    <property type="match status" value="1"/>
</dbReference>
<dbReference type="PANTHER" id="PTHR28259:SF1">
    <property type="entry name" value="FLUORIDE EXPORT PROTEIN 1-RELATED"/>
    <property type="match status" value="1"/>
</dbReference>
<dbReference type="Pfam" id="PF02537">
    <property type="entry name" value="CRCB"/>
    <property type="match status" value="1"/>
</dbReference>